<name>PA2B_CERCE</name>
<protein>
    <recommendedName>
        <fullName evidence="6">Basic phospholipase A2 Cc2-PLA2</fullName>
        <shortName>svPLA2</shortName>
        <ecNumber>3.1.1.4</ecNumber>
    </recommendedName>
    <alternativeName>
        <fullName>Phosphatidylcholine 2-acylhydrolase</fullName>
    </alternativeName>
</protein>
<comment type="function">
    <text evidence="4 5">Basic phospholipase A2 that inhibits ADP-, thrombin- and arachidonic acid-induced platelet aggregation (PubMed:24384926, PubMed:30239061). It also exhibits anticoagulant effects upon human plasma in vitro (PubMed:30239061). It induces a high hemolytic activity reaching its maximum after 24 hours (PubMed:24384926). It induces a marked elevation of plasmatic levels of interleukin-6 and -10, eosinophil peroxidase and complement lytic activities and it also provokes a drastic increase of lymphocytes, monocytes and neutrophils in peripheral blood accompanied by a rapid intense migration of neutrophils to the peritoneal cavity (PubMed:24384926). PLA2 catalyzes the calcium-dependent hydrolysis of the 2-acyl groups in 3-sn-phosphoglycerides.</text>
</comment>
<comment type="catalytic activity">
    <reaction evidence="2 3">
        <text>a 1,2-diacyl-sn-glycero-3-phosphocholine + H2O = a 1-acyl-sn-glycero-3-phosphocholine + a fatty acid + H(+)</text>
        <dbReference type="Rhea" id="RHEA:15801"/>
        <dbReference type="ChEBI" id="CHEBI:15377"/>
        <dbReference type="ChEBI" id="CHEBI:15378"/>
        <dbReference type="ChEBI" id="CHEBI:28868"/>
        <dbReference type="ChEBI" id="CHEBI:57643"/>
        <dbReference type="ChEBI" id="CHEBI:58168"/>
        <dbReference type="EC" id="3.1.1.4"/>
    </reaction>
</comment>
<comment type="cofactor">
    <cofactor evidence="1">
        <name>Ca(2+)</name>
        <dbReference type="ChEBI" id="CHEBI:29108"/>
    </cofactor>
    <text evidence="1">Binds 1 Ca(2+) ion.</text>
</comment>
<comment type="subunit">
    <text evidence="5">Monomer.</text>
</comment>
<comment type="subcellular location">
    <subcellularLocation>
        <location evidence="4">Secreted</location>
    </subcellularLocation>
</comment>
<comment type="tissue specificity">
    <text evidence="8">Expressed by the venom gland.</text>
</comment>
<comment type="mass spectrometry" mass="13534.0" method="MALDI" evidence="4"/>
<comment type="miscellaneous">
    <text evidence="5">Negative results: does not show significant fibrinogen-induced platelet aggregation.</text>
</comment>
<comment type="similarity">
    <text evidence="7">Belongs to the phospholipase A2 family. Group II subfamily. D49 sub-subfamily.</text>
</comment>
<keyword id="KW-1203">Blood coagulation cascade inhibiting toxin</keyword>
<keyword id="KW-0106">Calcium</keyword>
<keyword id="KW-0204">Cytolysis</keyword>
<keyword id="KW-0903">Direct protein sequencing</keyword>
<keyword id="KW-1015">Disulfide bond</keyword>
<keyword id="KW-0354">Hemolysis</keyword>
<keyword id="KW-1199">Hemostasis impairing toxin</keyword>
<keyword id="KW-0378">Hydrolase</keyword>
<keyword id="KW-0479">Metal-binding</keyword>
<keyword id="KW-1201">Platelet aggregation inhibiting toxin</keyword>
<keyword id="KW-0964">Secreted</keyword>
<keyword id="KW-0800">Toxin</keyword>
<sequence length="120" mass="13430">NLYQFGKMINHMVGKSPIFSYGDYGCYCGWGGKGTPVDATDRCCFVHDCCYGRANGCDPKLSTYSYNFQNGNIVCGNKYGCLRHICECDRVAAICFGENVNTYDKKFLSSSRCRQTSEQC</sequence>
<evidence type="ECO:0000250" key="1">
    <source>
        <dbReference type="UniProtKB" id="P14418"/>
    </source>
</evidence>
<evidence type="ECO:0000255" key="2">
    <source>
        <dbReference type="PROSITE-ProRule" id="PRU10035"/>
    </source>
</evidence>
<evidence type="ECO:0000255" key="3">
    <source>
        <dbReference type="PROSITE-ProRule" id="PRU10036"/>
    </source>
</evidence>
<evidence type="ECO:0000269" key="4">
    <source>
    </source>
</evidence>
<evidence type="ECO:0000269" key="5">
    <source>
    </source>
</evidence>
<evidence type="ECO:0000303" key="6">
    <source>
    </source>
</evidence>
<evidence type="ECO:0000305" key="7"/>
<evidence type="ECO:0000305" key="8">
    <source>
    </source>
</evidence>
<organism>
    <name type="scientific">Cerastes cerastes</name>
    <name type="common">Horned desert viper</name>
    <dbReference type="NCBI Taxonomy" id="8697"/>
    <lineage>
        <taxon>Eukaryota</taxon>
        <taxon>Metazoa</taxon>
        <taxon>Chordata</taxon>
        <taxon>Craniata</taxon>
        <taxon>Vertebrata</taxon>
        <taxon>Euteleostomi</taxon>
        <taxon>Lepidosauria</taxon>
        <taxon>Squamata</taxon>
        <taxon>Bifurcata</taxon>
        <taxon>Unidentata</taxon>
        <taxon>Episquamata</taxon>
        <taxon>Toxicofera</taxon>
        <taxon>Serpentes</taxon>
        <taxon>Colubroidea</taxon>
        <taxon>Viperidae</taxon>
        <taxon>Viperinae</taxon>
        <taxon>Cerastes</taxon>
    </lineage>
</organism>
<accession>P0DPS4</accession>
<dbReference type="EC" id="3.1.1.4"/>
<dbReference type="SMR" id="P0DPS4"/>
<dbReference type="GO" id="GO:0005576">
    <property type="term" value="C:extracellular region"/>
    <property type="evidence" value="ECO:0007669"/>
    <property type="project" value="UniProtKB-SubCell"/>
</dbReference>
<dbReference type="GO" id="GO:0005509">
    <property type="term" value="F:calcium ion binding"/>
    <property type="evidence" value="ECO:0007669"/>
    <property type="project" value="InterPro"/>
</dbReference>
<dbReference type="GO" id="GO:0047498">
    <property type="term" value="F:calcium-dependent phospholipase A2 activity"/>
    <property type="evidence" value="ECO:0007669"/>
    <property type="project" value="TreeGrafter"/>
</dbReference>
<dbReference type="GO" id="GO:0005543">
    <property type="term" value="F:phospholipid binding"/>
    <property type="evidence" value="ECO:0007669"/>
    <property type="project" value="TreeGrafter"/>
</dbReference>
<dbReference type="GO" id="GO:0090729">
    <property type="term" value="F:toxin activity"/>
    <property type="evidence" value="ECO:0007669"/>
    <property type="project" value="UniProtKB-KW"/>
</dbReference>
<dbReference type="GO" id="GO:0050482">
    <property type="term" value="P:arachidonate secretion"/>
    <property type="evidence" value="ECO:0007669"/>
    <property type="project" value="InterPro"/>
</dbReference>
<dbReference type="GO" id="GO:0031640">
    <property type="term" value="P:killing of cells of another organism"/>
    <property type="evidence" value="ECO:0007669"/>
    <property type="project" value="UniProtKB-KW"/>
</dbReference>
<dbReference type="GO" id="GO:0016042">
    <property type="term" value="P:lipid catabolic process"/>
    <property type="evidence" value="ECO:0007669"/>
    <property type="project" value="InterPro"/>
</dbReference>
<dbReference type="GO" id="GO:0006644">
    <property type="term" value="P:phospholipid metabolic process"/>
    <property type="evidence" value="ECO:0007669"/>
    <property type="project" value="InterPro"/>
</dbReference>
<dbReference type="CDD" id="cd00125">
    <property type="entry name" value="PLA2c"/>
    <property type="match status" value="1"/>
</dbReference>
<dbReference type="FunFam" id="1.20.90.10:FF:000001">
    <property type="entry name" value="Basic phospholipase A2 homolog"/>
    <property type="match status" value="1"/>
</dbReference>
<dbReference type="Gene3D" id="1.20.90.10">
    <property type="entry name" value="Phospholipase A2 domain"/>
    <property type="match status" value="1"/>
</dbReference>
<dbReference type="InterPro" id="IPR001211">
    <property type="entry name" value="PLipase_A2"/>
</dbReference>
<dbReference type="InterPro" id="IPR033112">
    <property type="entry name" value="PLipase_A2_Asp_AS"/>
</dbReference>
<dbReference type="InterPro" id="IPR016090">
    <property type="entry name" value="PLipase_A2_dom"/>
</dbReference>
<dbReference type="InterPro" id="IPR036444">
    <property type="entry name" value="PLipase_A2_dom_sf"/>
</dbReference>
<dbReference type="InterPro" id="IPR033113">
    <property type="entry name" value="PLipase_A2_His_AS"/>
</dbReference>
<dbReference type="PANTHER" id="PTHR11716:SF101">
    <property type="entry name" value="BASIC PHOSPHOLIPASE A2 PA-11-LIKE"/>
    <property type="match status" value="1"/>
</dbReference>
<dbReference type="PANTHER" id="PTHR11716">
    <property type="entry name" value="PHOSPHOLIPASE A2 FAMILY MEMBER"/>
    <property type="match status" value="1"/>
</dbReference>
<dbReference type="Pfam" id="PF00068">
    <property type="entry name" value="Phospholip_A2_1"/>
    <property type="match status" value="1"/>
</dbReference>
<dbReference type="PRINTS" id="PR00389">
    <property type="entry name" value="PHPHLIPASEA2"/>
</dbReference>
<dbReference type="SMART" id="SM00085">
    <property type="entry name" value="PA2c"/>
    <property type="match status" value="1"/>
</dbReference>
<dbReference type="SUPFAM" id="SSF48619">
    <property type="entry name" value="Phospholipase A2, PLA2"/>
    <property type="match status" value="1"/>
</dbReference>
<dbReference type="PROSITE" id="PS00119">
    <property type="entry name" value="PA2_ASP"/>
    <property type="match status" value="1"/>
</dbReference>
<dbReference type="PROSITE" id="PS00118">
    <property type="entry name" value="PA2_HIS"/>
    <property type="match status" value="1"/>
</dbReference>
<proteinExistence type="evidence at protein level"/>
<feature type="chain" id="PRO_0000446022" description="Basic phospholipase A2 Cc2-PLA2" evidence="5">
    <location>
        <begin position="1"/>
        <end position="120"/>
    </location>
</feature>
<feature type="active site" evidence="1">
    <location>
        <position position="47"/>
    </location>
</feature>
<feature type="active site" evidence="1">
    <location>
        <position position="89"/>
    </location>
</feature>
<feature type="binding site" evidence="1">
    <location>
        <position position="27"/>
    </location>
    <ligand>
        <name>Ca(2+)</name>
        <dbReference type="ChEBI" id="CHEBI:29108"/>
    </ligand>
</feature>
<feature type="binding site" evidence="1">
    <location>
        <position position="29"/>
    </location>
    <ligand>
        <name>Ca(2+)</name>
        <dbReference type="ChEBI" id="CHEBI:29108"/>
    </ligand>
</feature>
<feature type="binding site" evidence="1">
    <location>
        <position position="31"/>
    </location>
    <ligand>
        <name>Ca(2+)</name>
        <dbReference type="ChEBI" id="CHEBI:29108"/>
    </ligand>
</feature>
<feature type="binding site" evidence="1">
    <location>
        <position position="48"/>
    </location>
    <ligand>
        <name>Ca(2+)</name>
        <dbReference type="ChEBI" id="CHEBI:29108"/>
    </ligand>
</feature>
<feature type="disulfide bond" evidence="1">
    <location>
        <begin position="26"/>
        <end position="113"/>
    </location>
</feature>
<feature type="disulfide bond" evidence="1">
    <location>
        <begin position="28"/>
        <end position="44"/>
    </location>
</feature>
<feature type="disulfide bond" evidence="1">
    <location>
        <begin position="43"/>
        <end position="95"/>
    </location>
</feature>
<feature type="disulfide bond" evidence="1">
    <location>
        <begin position="49"/>
        <end position="120"/>
    </location>
</feature>
<feature type="disulfide bond" evidence="1">
    <location>
        <begin position="50"/>
        <end position="88"/>
    </location>
</feature>
<feature type="disulfide bond" evidence="1">
    <location>
        <begin position="57"/>
        <end position="81"/>
    </location>
</feature>
<feature type="disulfide bond" evidence="1">
    <location>
        <begin position="75"/>
        <end position="86"/>
    </location>
</feature>
<reference key="1">
    <citation type="journal article" date="2018" name="J. Biochem. Mol. Toxicol.">
        <title>Antiplatelet and anticoagulant activities of two phospholipase A2s purified from Cerastes cerastes venom: structure-function relationship.</title>
        <authorList>
            <person name="Fatah C."/>
            <person name="Samah S."/>
            <person name="Fatima L.D."/>
        </authorList>
    </citation>
    <scope>PROTEIN SEQUENCE</scope>
    <scope>FUNCTION</scope>
    <scope>SUBUNIT</scope>
    <scope>IDENTIFICATION BY MASS SPECTROMETRY</scope>
    <source>
        <tissue>Venom</tissue>
    </source>
</reference>
<reference key="2">
    <citation type="journal article" date="2014" name="Protein J.">
        <title>Isolation, functional characterization and proteomic identification of CC2-PLA(2) from Cerastes cerastes venom: a basic platelet-aggregation-inhibiting factor.</title>
        <authorList>
            <person name="Cherifi F."/>
            <person name="Namane A."/>
            <person name="Laraba-Djebari F."/>
        </authorList>
    </citation>
    <scope>FUNCTION</scope>
    <scope>IDENTIFICATION BY MASS SPECTROMETRY</scope>
    <scope>MASS SPECTROMETRY</scope>
    <scope>SUBCELLULAR LOCATION</scope>
    <source>
        <tissue>Venom</tissue>
    </source>
</reference>